<protein>
    <recommendedName>
        <fullName>F-box protein At3g22350</fullName>
    </recommendedName>
</protein>
<reference key="1">
    <citation type="journal article" date="2000" name="DNA Res.">
        <title>Structural analysis of Arabidopsis thaliana chromosome 3. I. Sequence features of the regions of 4,504,864 bp covered by sixty P1 and TAC clones.</title>
        <authorList>
            <person name="Sato S."/>
            <person name="Nakamura Y."/>
            <person name="Kaneko T."/>
            <person name="Katoh T."/>
            <person name="Asamizu E."/>
            <person name="Tabata S."/>
        </authorList>
    </citation>
    <scope>NUCLEOTIDE SEQUENCE [LARGE SCALE GENOMIC DNA]</scope>
    <source>
        <strain>cv. Columbia</strain>
    </source>
</reference>
<reference key="2">
    <citation type="journal article" date="2017" name="Plant J.">
        <title>Araport11: a complete reannotation of the Arabidopsis thaliana reference genome.</title>
        <authorList>
            <person name="Cheng C.Y."/>
            <person name="Krishnakumar V."/>
            <person name="Chan A.P."/>
            <person name="Thibaud-Nissen F."/>
            <person name="Schobel S."/>
            <person name="Town C.D."/>
        </authorList>
    </citation>
    <scope>GENOME REANNOTATION</scope>
    <source>
        <strain>cv. Columbia</strain>
    </source>
</reference>
<reference key="3">
    <citation type="journal article" date="2006" name="Plant Biotechnol. J.">
        <title>Simultaneous high-throughput recombinational cloning of open reading frames in closed and open configurations.</title>
        <authorList>
            <person name="Underwood B.A."/>
            <person name="Vanderhaeghen R."/>
            <person name="Whitford R."/>
            <person name="Town C.D."/>
            <person name="Hilson P."/>
        </authorList>
    </citation>
    <scope>NUCLEOTIDE SEQUENCE [LARGE SCALE MRNA]</scope>
    <source>
        <strain>cv. Columbia</strain>
    </source>
</reference>
<dbReference type="EMBL" id="AB022215">
    <property type="protein sequence ID" value="BAB01773.1"/>
    <property type="status" value="ALT_SEQ"/>
    <property type="molecule type" value="Genomic_DNA"/>
</dbReference>
<dbReference type="EMBL" id="CP002686">
    <property type="protein sequence ID" value="AEE76625.1"/>
    <property type="molecule type" value="Genomic_DNA"/>
</dbReference>
<dbReference type="EMBL" id="DQ446685">
    <property type="protein sequence ID" value="ABE65957.1"/>
    <property type="molecule type" value="mRNA"/>
</dbReference>
<dbReference type="RefSeq" id="NP_001189949.1">
    <molecule id="Q1PEN2-1"/>
    <property type="nucleotide sequence ID" value="NM_001203020.1"/>
</dbReference>
<dbReference type="FunCoup" id="Q1PEN2">
    <property type="interactions" value="26"/>
</dbReference>
<dbReference type="STRING" id="3702.Q1PEN2"/>
<dbReference type="PaxDb" id="3702-AT3G22350.1"/>
<dbReference type="EnsemblPlants" id="AT3G22350.2">
    <molecule id="Q1PEN2-1"/>
    <property type="protein sequence ID" value="AT3G22350.2"/>
    <property type="gene ID" value="AT3G22350"/>
</dbReference>
<dbReference type="GeneID" id="821804"/>
<dbReference type="Gramene" id="AT3G22350.2">
    <molecule id="Q1PEN2-1"/>
    <property type="protein sequence ID" value="AT3G22350.2"/>
    <property type="gene ID" value="AT3G22350"/>
</dbReference>
<dbReference type="KEGG" id="ath:AT3G22350"/>
<dbReference type="Araport" id="AT3G22350"/>
<dbReference type="TAIR" id="AT3G22350"/>
<dbReference type="HOGENOM" id="CLU_034692_4_2_1"/>
<dbReference type="InParanoid" id="Q1PEN2"/>
<dbReference type="PhylomeDB" id="Q1PEN2"/>
<dbReference type="PRO" id="PR:Q1PEN2"/>
<dbReference type="Proteomes" id="UP000006548">
    <property type="component" value="Chromosome 3"/>
</dbReference>
<dbReference type="ExpressionAtlas" id="Q1PEN2">
    <property type="expression patterns" value="baseline and differential"/>
</dbReference>
<dbReference type="CDD" id="cd22157">
    <property type="entry name" value="F-box_AtFBW1-like"/>
    <property type="match status" value="1"/>
</dbReference>
<dbReference type="Gene3D" id="1.20.1280.50">
    <property type="match status" value="1"/>
</dbReference>
<dbReference type="InterPro" id="IPR017451">
    <property type="entry name" value="F-box-assoc_interact_dom"/>
</dbReference>
<dbReference type="InterPro" id="IPR036047">
    <property type="entry name" value="F-box-like_dom_sf"/>
</dbReference>
<dbReference type="InterPro" id="IPR001810">
    <property type="entry name" value="F-box_dom"/>
</dbReference>
<dbReference type="InterPro" id="IPR050796">
    <property type="entry name" value="SCF_F-box_component"/>
</dbReference>
<dbReference type="NCBIfam" id="TIGR01640">
    <property type="entry name" value="F_box_assoc_1"/>
    <property type="match status" value="1"/>
</dbReference>
<dbReference type="PANTHER" id="PTHR31672">
    <property type="entry name" value="BNACNNG10540D PROTEIN"/>
    <property type="match status" value="1"/>
</dbReference>
<dbReference type="PANTHER" id="PTHR31672:SF13">
    <property type="entry name" value="F-BOX PROTEIN CPR30-LIKE"/>
    <property type="match status" value="1"/>
</dbReference>
<dbReference type="Pfam" id="PF00646">
    <property type="entry name" value="F-box"/>
    <property type="match status" value="1"/>
</dbReference>
<dbReference type="SMART" id="SM00256">
    <property type="entry name" value="FBOX"/>
    <property type="match status" value="1"/>
</dbReference>
<dbReference type="SUPFAM" id="SSF81383">
    <property type="entry name" value="F-box domain"/>
    <property type="match status" value="1"/>
</dbReference>
<dbReference type="PROSITE" id="PS50181">
    <property type="entry name" value="FBOX"/>
    <property type="match status" value="1"/>
</dbReference>
<name>FB174_ARATH</name>
<proteinExistence type="evidence at transcript level"/>
<comment type="alternative products">
    <event type="alternative splicing"/>
    <isoform>
        <id>Q1PEN2-1</id>
        <name>1</name>
        <sequence type="displayed"/>
    </isoform>
    <text>A number of isoforms are produced. According to EST sequences.</text>
</comment>
<comment type="sequence caution" evidence="2">
    <conflict type="erroneous gene model prediction">
        <sequence resource="EMBL-CDS" id="BAB01773"/>
    </conflict>
</comment>
<keyword id="KW-0025">Alternative splicing</keyword>
<keyword id="KW-1185">Reference proteome</keyword>
<sequence>MSDLPLDLVEEILSRVSATSLKRLRSTCKQWNTLFKKRSFSQKHFHIAPKESMVLMLKEYRVCSMNINLNVSPPSVEFQGTLGIKDDSHSNLGQVEIVEVYHCDGLLLCATRDNRLVVWNPCLGETRWIQLKDECRRYSTFALGYENNKFCRRNYKILRYWGWFHDHIPDDGGRFRFEIYDFRSDSWKVLDDVPDDRFPPRDLIILVFRHLEIMVLWLYQLLEKNNSQCYKRLRHQRWRYL</sequence>
<evidence type="ECO:0000255" key="1">
    <source>
        <dbReference type="PROSITE-ProRule" id="PRU00080"/>
    </source>
</evidence>
<evidence type="ECO:0000305" key="2"/>
<gene>
    <name type="ordered locus">At3g22350</name>
    <name type="ORF">MCB17.9</name>
</gene>
<organism>
    <name type="scientific">Arabidopsis thaliana</name>
    <name type="common">Mouse-ear cress</name>
    <dbReference type="NCBI Taxonomy" id="3702"/>
    <lineage>
        <taxon>Eukaryota</taxon>
        <taxon>Viridiplantae</taxon>
        <taxon>Streptophyta</taxon>
        <taxon>Embryophyta</taxon>
        <taxon>Tracheophyta</taxon>
        <taxon>Spermatophyta</taxon>
        <taxon>Magnoliopsida</taxon>
        <taxon>eudicotyledons</taxon>
        <taxon>Gunneridae</taxon>
        <taxon>Pentapetalae</taxon>
        <taxon>rosids</taxon>
        <taxon>malvids</taxon>
        <taxon>Brassicales</taxon>
        <taxon>Brassicaceae</taxon>
        <taxon>Camelineae</taxon>
        <taxon>Arabidopsis</taxon>
    </lineage>
</organism>
<accession>Q1PEN2</accession>
<accession>Q9LUW2</accession>
<feature type="chain" id="PRO_0000283444" description="F-box protein At3g22350">
    <location>
        <begin position="1"/>
        <end position="241"/>
    </location>
</feature>
<feature type="domain" description="F-box" evidence="1">
    <location>
        <begin position="1"/>
        <end position="44"/>
    </location>
</feature>